<organism>
    <name type="scientific">Xenopus laevis</name>
    <name type="common">African clawed frog</name>
    <dbReference type="NCBI Taxonomy" id="8355"/>
    <lineage>
        <taxon>Eukaryota</taxon>
        <taxon>Metazoa</taxon>
        <taxon>Chordata</taxon>
        <taxon>Craniata</taxon>
        <taxon>Vertebrata</taxon>
        <taxon>Euteleostomi</taxon>
        <taxon>Amphibia</taxon>
        <taxon>Batrachia</taxon>
        <taxon>Anura</taxon>
        <taxon>Pipoidea</taxon>
        <taxon>Pipidae</taxon>
        <taxon>Xenopodinae</taxon>
        <taxon>Xenopus</taxon>
        <taxon>Xenopus</taxon>
    </lineage>
</organism>
<feature type="chain" id="PRO_0000404155" description="Protein arginine N-methyltransferase 2">
    <location>
        <begin position="1"/>
        <end position="432"/>
    </location>
</feature>
<feature type="domain" description="SH3" evidence="3">
    <location>
        <begin position="29"/>
        <end position="88"/>
    </location>
</feature>
<feature type="domain" description="SAM-dependent MTase PRMT-type" evidence="4">
    <location>
        <begin position="101"/>
        <end position="405"/>
    </location>
</feature>
<feature type="region of interest" description="Disordered" evidence="5">
    <location>
        <begin position="1"/>
        <end position="22"/>
    </location>
</feature>
<feature type="compositionally biased region" description="Low complexity" evidence="5">
    <location>
        <begin position="1"/>
        <end position="11"/>
    </location>
</feature>
<feature type="active site" evidence="1">
    <location>
        <position position="213"/>
    </location>
</feature>
<feature type="active site" evidence="1">
    <location>
        <position position="222"/>
    </location>
</feature>
<feature type="binding site" evidence="1">
    <location>
        <position position="114"/>
    </location>
    <ligand>
        <name>S-adenosyl-L-methionine</name>
        <dbReference type="ChEBI" id="CHEBI:59789"/>
    </ligand>
</feature>
<feature type="binding site" evidence="1">
    <location>
        <position position="123"/>
    </location>
    <ligand>
        <name>S-adenosyl-L-methionine</name>
        <dbReference type="ChEBI" id="CHEBI:59789"/>
    </ligand>
</feature>
<feature type="binding site" evidence="1">
    <location>
        <position position="147"/>
    </location>
    <ligand>
        <name>S-adenosyl-L-methionine</name>
        <dbReference type="ChEBI" id="CHEBI:59789"/>
    </ligand>
</feature>
<feature type="binding site" evidence="1">
    <location>
        <position position="170"/>
    </location>
    <ligand>
        <name>S-adenosyl-L-methionine</name>
        <dbReference type="ChEBI" id="CHEBI:59789"/>
    </ligand>
</feature>
<feature type="binding site" evidence="1">
    <location>
        <position position="199"/>
    </location>
    <ligand>
        <name>S-adenosyl-L-methionine</name>
        <dbReference type="ChEBI" id="CHEBI:59789"/>
    </ligand>
</feature>
<accession>D9IVE5</accession>
<sequence>MESSSECSSISDFQDSTEGDDANTLPENLCMREYVVICDYVATDNTQLSLCSGDKVLLLNAVSQDWWWVNHNGTCGYVPASHLHDALNEQEDTEVNDPWQDEEYYGSYKTLKLHLEMLSDVPRTMTYQNVILKNSSSLCGKHILDLGCGTGIISFFCAKFAQPEAVYAVEASKIAEQTCRLVEQNGISSLVHVIRQQAEELDLPTKVDVLVSEWMGTCLLFEFMLESVLQARDRWLKEDGVMWPSTACIHLVPCSAYKEYSNKVLFWDNPYQLDFSLLKPPATKEFFAKPQPDYILQPEDCLSEPCTLFHLNLKTLQVAELERMNCDFTFLVHTNGLLHGFTAWFSVQFENLEEQGHLELNTGPFSPLTHWKHTLFMLDEPLQVQKRDKISGSVVFERNSVWRRHMSVTLSWVISRELKMQKVGCKVFPIWR</sequence>
<comment type="function">
    <text evidence="1 6">Arginine methyltransferase that methylates the guanidino nitrogens of arginyl residues in proteins such as histones. Involved in growth regulation (By similarity). Involved in embryonic dorsal development.</text>
</comment>
<comment type="catalytic activity">
    <reaction evidence="2">
        <text>L-arginyl-[protein] + 2 S-adenosyl-L-methionine = N(omega),N(omega)-dimethyl-L-arginyl-[protein] + 2 S-adenosyl-L-homocysteine + 2 H(+)</text>
        <dbReference type="Rhea" id="RHEA:48096"/>
        <dbReference type="Rhea" id="RHEA-COMP:10532"/>
        <dbReference type="Rhea" id="RHEA-COMP:11991"/>
        <dbReference type="ChEBI" id="CHEBI:15378"/>
        <dbReference type="ChEBI" id="CHEBI:29965"/>
        <dbReference type="ChEBI" id="CHEBI:57856"/>
        <dbReference type="ChEBI" id="CHEBI:59789"/>
        <dbReference type="ChEBI" id="CHEBI:61897"/>
        <dbReference type="EC" id="2.1.1.319"/>
    </reaction>
</comment>
<comment type="subunit">
    <text evidence="6">Interacts with ctnnb1.</text>
</comment>
<comment type="subcellular location">
    <subcellularLocation>
        <location evidence="1">Cytoplasm</location>
    </subcellularLocation>
    <subcellularLocation>
        <location evidence="1">Nucleus</location>
    </subcellularLocation>
</comment>
<comment type="similarity">
    <text evidence="4">Belongs to the class I-like SAM-binding methyltransferase superfamily. Protein arginine N-methyltransferase family.</text>
</comment>
<comment type="sequence caution" evidence="7">
    <conflict type="erroneous initiation">
        <sequence resource="EMBL-CDS" id="ADK11289"/>
    </conflict>
    <text>Extended N-terminus.</text>
</comment>
<name>ANM2_XENLA</name>
<reference key="1">
    <citation type="journal article" date="2010" name="Dev. Cell">
        <title>beta-Catenin primes organizer gene expression by recruiting a histone H3 arginine 8 methyltransferase, Prmt2.</title>
        <authorList>
            <person name="Blythe S.A."/>
            <person name="Cha S.-W."/>
            <person name="Tadjuidje E."/>
            <person name="Heasman J."/>
            <person name="Klein P.S."/>
        </authorList>
    </citation>
    <scope>NUCLEOTIDE SEQUENCE [MRNA]</scope>
    <scope>FUNCTION</scope>
    <scope>INTERACTION WITH CTNNB1</scope>
</reference>
<gene>
    <name type="primary">prmt2</name>
</gene>
<evidence type="ECO:0000250" key="1"/>
<evidence type="ECO:0000250" key="2">
    <source>
        <dbReference type="UniProtKB" id="P55345"/>
    </source>
</evidence>
<evidence type="ECO:0000255" key="3">
    <source>
        <dbReference type="PROSITE-ProRule" id="PRU00192"/>
    </source>
</evidence>
<evidence type="ECO:0000255" key="4">
    <source>
        <dbReference type="PROSITE-ProRule" id="PRU01015"/>
    </source>
</evidence>
<evidence type="ECO:0000256" key="5">
    <source>
        <dbReference type="SAM" id="MobiDB-lite"/>
    </source>
</evidence>
<evidence type="ECO:0000269" key="6">
    <source>
    </source>
</evidence>
<evidence type="ECO:0000305" key="7"/>
<dbReference type="EC" id="2.1.1.319" evidence="2"/>
<dbReference type="EMBL" id="HM205111">
    <property type="protein sequence ID" value="ADK11289.1"/>
    <property type="status" value="ALT_INIT"/>
    <property type="molecule type" value="mRNA"/>
</dbReference>
<dbReference type="RefSeq" id="NP_001181877.1">
    <property type="nucleotide sequence ID" value="NM_001194948.1"/>
</dbReference>
<dbReference type="SMR" id="D9IVE5"/>
<dbReference type="GeneID" id="100499207"/>
<dbReference type="KEGG" id="xla:100499207"/>
<dbReference type="AGR" id="Xenbase:XB-GENE-6486904"/>
<dbReference type="CTD" id="100499207"/>
<dbReference type="Xenbase" id="XB-GENE-6486904">
    <property type="gene designation" value="prmt2.L"/>
</dbReference>
<dbReference type="OrthoDB" id="7848332at2759"/>
<dbReference type="Proteomes" id="UP000186698">
    <property type="component" value="Chromosome 9_10L"/>
</dbReference>
<dbReference type="Bgee" id="100499207">
    <property type="expression patterns" value="Expressed in spleen and 19 other cell types or tissues"/>
</dbReference>
<dbReference type="GO" id="GO:0005737">
    <property type="term" value="C:cytoplasm"/>
    <property type="evidence" value="ECO:0000250"/>
    <property type="project" value="UniProtKB"/>
</dbReference>
<dbReference type="GO" id="GO:0005634">
    <property type="term" value="C:nucleus"/>
    <property type="evidence" value="ECO:0000250"/>
    <property type="project" value="UniProtKB"/>
</dbReference>
<dbReference type="GO" id="GO:0140592">
    <property type="term" value="F:histone H3R8 methyltransferase activity"/>
    <property type="evidence" value="ECO:0000314"/>
    <property type="project" value="UniProtKB"/>
</dbReference>
<dbReference type="GO" id="GO:0042054">
    <property type="term" value="F:histone methyltransferase activity"/>
    <property type="evidence" value="ECO:0000318"/>
    <property type="project" value="GO_Central"/>
</dbReference>
<dbReference type="GO" id="GO:0030331">
    <property type="term" value="F:nuclear estrogen receptor binding"/>
    <property type="evidence" value="ECO:0000250"/>
    <property type="project" value="UniProtKB"/>
</dbReference>
<dbReference type="GO" id="GO:0016274">
    <property type="term" value="F:protein-arginine N-methyltransferase activity"/>
    <property type="evidence" value="ECO:0000318"/>
    <property type="project" value="GO_Central"/>
</dbReference>
<dbReference type="GO" id="GO:0035242">
    <property type="term" value="F:protein-arginine omega-N asymmetric methyltransferase activity"/>
    <property type="evidence" value="ECO:0007669"/>
    <property type="project" value="UniProtKB-EC"/>
</dbReference>
<dbReference type="GO" id="GO:0006338">
    <property type="term" value="P:chromatin remodeling"/>
    <property type="evidence" value="ECO:0000318"/>
    <property type="project" value="GO_Central"/>
</dbReference>
<dbReference type="GO" id="GO:0048588">
    <property type="term" value="P:developmental cell growth"/>
    <property type="evidence" value="ECO:0000315"/>
    <property type="project" value="UniProtKB"/>
</dbReference>
<dbReference type="GO" id="GO:0032259">
    <property type="term" value="P:methylation"/>
    <property type="evidence" value="ECO:0007669"/>
    <property type="project" value="UniProtKB-KW"/>
</dbReference>
<dbReference type="GO" id="GO:0045892">
    <property type="term" value="P:negative regulation of DNA-templated transcription"/>
    <property type="evidence" value="ECO:0000250"/>
    <property type="project" value="UniProtKB"/>
</dbReference>
<dbReference type="GO" id="GO:2000134">
    <property type="term" value="P:negative regulation of G1/S transition of mitotic cell cycle"/>
    <property type="evidence" value="ECO:0000250"/>
    <property type="project" value="UniProtKB"/>
</dbReference>
<dbReference type="GO" id="GO:0032088">
    <property type="term" value="P:negative regulation of NF-kappaB transcription factor activity"/>
    <property type="evidence" value="ECO:0000250"/>
    <property type="project" value="UniProtKB"/>
</dbReference>
<dbReference type="GO" id="GO:0043065">
    <property type="term" value="P:positive regulation of apoptotic process"/>
    <property type="evidence" value="ECO:0000250"/>
    <property type="project" value="UniProtKB"/>
</dbReference>
<dbReference type="GO" id="GO:0045893">
    <property type="term" value="P:positive regulation of DNA-templated transcription"/>
    <property type="evidence" value="ECO:0000250"/>
    <property type="project" value="UniProtKB"/>
</dbReference>
<dbReference type="GO" id="GO:0060765">
    <property type="term" value="P:regulation of androgen receptor signaling pathway"/>
    <property type="evidence" value="ECO:0000250"/>
    <property type="project" value="UniProtKB"/>
</dbReference>
<dbReference type="GO" id="GO:0006355">
    <property type="term" value="P:regulation of DNA-templated transcription"/>
    <property type="evidence" value="ECO:0000318"/>
    <property type="project" value="GO_Central"/>
</dbReference>
<dbReference type="CDD" id="cd02440">
    <property type="entry name" value="AdoMet_MTases"/>
    <property type="match status" value="1"/>
</dbReference>
<dbReference type="CDD" id="cd11806">
    <property type="entry name" value="SH3_PRMT2"/>
    <property type="match status" value="1"/>
</dbReference>
<dbReference type="FunFam" id="2.30.30.40:FF:000385">
    <property type="entry name" value="Protein arginine N-methyltransferase 2"/>
    <property type="match status" value="1"/>
</dbReference>
<dbReference type="FunFam" id="2.70.160.11:FF:000007">
    <property type="entry name" value="Protein arginine N-methyltransferase 2"/>
    <property type="match status" value="1"/>
</dbReference>
<dbReference type="FunFam" id="3.40.50.150:FF:000016">
    <property type="entry name" value="Protein arginine N-methyltransferase 6"/>
    <property type="match status" value="1"/>
</dbReference>
<dbReference type="Gene3D" id="2.70.160.11">
    <property type="entry name" value="Hnrnp arginine n-methyltransferase1"/>
    <property type="match status" value="1"/>
</dbReference>
<dbReference type="Gene3D" id="2.30.30.40">
    <property type="entry name" value="SH3 Domains"/>
    <property type="match status" value="1"/>
</dbReference>
<dbReference type="Gene3D" id="3.40.50.150">
    <property type="entry name" value="Vaccinia Virus protein VP39"/>
    <property type="match status" value="1"/>
</dbReference>
<dbReference type="InterPro" id="IPR025799">
    <property type="entry name" value="Arg_MeTrfase"/>
</dbReference>
<dbReference type="InterPro" id="IPR041698">
    <property type="entry name" value="Methyltransf_25"/>
</dbReference>
<dbReference type="InterPro" id="IPR055135">
    <property type="entry name" value="PRMT_dom"/>
</dbReference>
<dbReference type="InterPro" id="IPR029063">
    <property type="entry name" value="SAM-dependent_MTases_sf"/>
</dbReference>
<dbReference type="InterPro" id="IPR036028">
    <property type="entry name" value="SH3-like_dom_sf"/>
</dbReference>
<dbReference type="InterPro" id="IPR001452">
    <property type="entry name" value="SH3_domain"/>
</dbReference>
<dbReference type="PANTHER" id="PTHR11006">
    <property type="entry name" value="PROTEIN ARGININE N-METHYLTRANSFERASE"/>
    <property type="match status" value="1"/>
</dbReference>
<dbReference type="PANTHER" id="PTHR11006:SF92">
    <property type="entry name" value="PROTEIN ARGININE N-METHYLTRANSFERASE 2"/>
    <property type="match status" value="1"/>
</dbReference>
<dbReference type="Pfam" id="PF13649">
    <property type="entry name" value="Methyltransf_25"/>
    <property type="match status" value="1"/>
</dbReference>
<dbReference type="Pfam" id="PF22528">
    <property type="entry name" value="PRMT_C"/>
    <property type="match status" value="1"/>
</dbReference>
<dbReference type="Pfam" id="PF07653">
    <property type="entry name" value="SH3_2"/>
    <property type="match status" value="1"/>
</dbReference>
<dbReference type="SMART" id="SM00326">
    <property type="entry name" value="SH3"/>
    <property type="match status" value="1"/>
</dbReference>
<dbReference type="SUPFAM" id="SSF53335">
    <property type="entry name" value="S-adenosyl-L-methionine-dependent methyltransferases"/>
    <property type="match status" value="1"/>
</dbReference>
<dbReference type="SUPFAM" id="SSF50044">
    <property type="entry name" value="SH3-domain"/>
    <property type="match status" value="1"/>
</dbReference>
<dbReference type="PROSITE" id="PS51678">
    <property type="entry name" value="SAM_MT_PRMT"/>
    <property type="match status" value="1"/>
</dbReference>
<dbReference type="PROSITE" id="PS50002">
    <property type="entry name" value="SH3"/>
    <property type="match status" value="1"/>
</dbReference>
<keyword id="KW-0963">Cytoplasm</keyword>
<keyword id="KW-0489">Methyltransferase</keyword>
<keyword id="KW-0539">Nucleus</keyword>
<keyword id="KW-1185">Reference proteome</keyword>
<keyword id="KW-0949">S-adenosyl-L-methionine</keyword>
<keyword id="KW-0728">SH3 domain</keyword>
<keyword id="KW-0808">Transferase</keyword>
<protein>
    <recommendedName>
        <fullName>Protein arginine N-methyltransferase 2</fullName>
        <ecNumber evidence="2">2.1.1.319</ecNumber>
    </recommendedName>
    <alternativeName>
        <fullName>Histone-arginine N-methyltransferase PRMT2</fullName>
    </alternativeName>
</protein>
<proteinExistence type="evidence at protein level"/>